<reference key="1">
    <citation type="journal article" date="2000" name="Nature">
        <title>The genome sequence of the plant pathogen Xylella fastidiosa.</title>
        <authorList>
            <person name="Simpson A.J.G."/>
            <person name="Reinach F.C."/>
            <person name="Arruda P."/>
            <person name="Abreu F.A."/>
            <person name="Acencio M."/>
            <person name="Alvarenga R."/>
            <person name="Alves L.M.C."/>
            <person name="Araya J.E."/>
            <person name="Baia G.S."/>
            <person name="Baptista C.S."/>
            <person name="Barros M.H."/>
            <person name="Bonaccorsi E.D."/>
            <person name="Bordin S."/>
            <person name="Bove J.M."/>
            <person name="Briones M.R.S."/>
            <person name="Bueno M.R.P."/>
            <person name="Camargo A.A."/>
            <person name="Camargo L.E.A."/>
            <person name="Carraro D.M."/>
            <person name="Carrer H."/>
            <person name="Colauto N.B."/>
            <person name="Colombo C."/>
            <person name="Costa F.F."/>
            <person name="Costa M.C.R."/>
            <person name="Costa-Neto C.M."/>
            <person name="Coutinho L.L."/>
            <person name="Cristofani M."/>
            <person name="Dias-Neto E."/>
            <person name="Docena C."/>
            <person name="El-Dorry H."/>
            <person name="Facincani A.P."/>
            <person name="Ferreira A.J.S."/>
            <person name="Ferreira V.C.A."/>
            <person name="Ferro J.A."/>
            <person name="Fraga J.S."/>
            <person name="Franca S.C."/>
            <person name="Franco M.C."/>
            <person name="Frohme M."/>
            <person name="Furlan L.R."/>
            <person name="Garnier M."/>
            <person name="Goldman G.H."/>
            <person name="Goldman M.H.S."/>
            <person name="Gomes S.L."/>
            <person name="Gruber A."/>
            <person name="Ho P.L."/>
            <person name="Hoheisel J.D."/>
            <person name="Junqueira M.L."/>
            <person name="Kemper E.L."/>
            <person name="Kitajima J.P."/>
            <person name="Krieger J.E."/>
            <person name="Kuramae E.E."/>
            <person name="Laigret F."/>
            <person name="Lambais M.R."/>
            <person name="Leite L.C.C."/>
            <person name="Lemos E.G.M."/>
            <person name="Lemos M.V.F."/>
            <person name="Lopes S.A."/>
            <person name="Lopes C.R."/>
            <person name="Machado J.A."/>
            <person name="Machado M.A."/>
            <person name="Madeira A.M.B.N."/>
            <person name="Madeira H.M.F."/>
            <person name="Marino C.L."/>
            <person name="Marques M.V."/>
            <person name="Martins E.A.L."/>
            <person name="Martins E.M.F."/>
            <person name="Matsukuma A.Y."/>
            <person name="Menck C.F.M."/>
            <person name="Miracca E.C."/>
            <person name="Miyaki C.Y."/>
            <person name="Monteiro-Vitorello C.B."/>
            <person name="Moon D.H."/>
            <person name="Nagai M.A."/>
            <person name="Nascimento A.L.T.O."/>
            <person name="Netto L.E.S."/>
            <person name="Nhani A. Jr."/>
            <person name="Nobrega F.G."/>
            <person name="Nunes L.R."/>
            <person name="Oliveira M.A."/>
            <person name="de Oliveira M.C."/>
            <person name="de Oliveira R.C."/>
            <person name="Palmieri D.A."/>
            <person name="Paris A."/>
            <person name="Peixoto B.R."/>
            <person name="Pereira G.A.G."/>
            <person name="Pereira H.A. Jr."/>
            <person name="Pesquero J.B."/>
            <person name="Quaggio R.B."/>
            <person name="Roberto P.G."/>
            <person name="Rodrigues V."/>
            <person name="de Rosa A.J.M."/>
            <person name="de Rosa V.E. Jr."/>
            <person name="de Sa R.G."/>
            <person name="Santelli R.V."/>
            <person name="Sawasaki H.E."/>
            <person name="da Silva A.C.R."/>
            <person name="da Silva A.M."/>
            <person name="da Silva F.R."/>
            <person name="Silva W.A. Jr."/>
            <person name="da Silveira J.F."/>
            <person name="Silvestri M.L.Z."/>
            <person name="Siqueira W.J."/>
            <person name="de Souza A.A."/>
            <person name="de Souza A.P."/>
            <person name="Terenzi M.F."/>
            <person name="Truffi D."/>
            <person name="Tsai S.M."/>
            <person name="Tsuhako M.H."/>
            <person name="Vallada H."/>
            <person name="Van Sluys M.A."/>
            <person name="Verjovski-Almeida S."/>
            <person name="Vettore A.L."/>
            <person name="Zago M.A."/>
            <person name="Zatz M."/>
            <person name="Meidanis J."/>
            <person name="Setubal J.C."/>
        </authorList>
    </citation>
    <scope>NUCLEOTIDE SEQUENCE [LARGE SCALE GENOMIC DNA]</scope>
    <source>
        <strain>9a5c</strain>
    </source>
</reference>
<protein>
    <recommendedName>
        <fullName>FAD assembly factor SdhE</fullName>
    </recommendedName>
</protein>
<dbReference type="EMBL" id="AE003849">
    <property type="protein sequence ID" value="AAF83884.1"/>
    <property type="molecule type" value="Genomic_DNA"/>
</dbReference>
<dbReference type="PIR" id="G82725">
    <property type="entry name" value="G82725"/>
</dbReference>
<dbReference type="SMR" id="Q9PEF4"/>
<dbReference type="STRING" id="160492.XF_1074"/>
<dbReference type="KEGG" id="xfa:XF_1074"/>
<dbReference type="eggNOG" id="COG2938">
    <property type="taxonomic scope" value="Bacteria"/>
</dbReference>
<dbReference type="HOGENOM" id="CLU_103054_2_1_6"/>
<dbReference type="Proteomes" id="UP000000812">
    <property type="component" value="Chromosome"/>
</dbReference>
<dbReference type="GO" id="GO:0005737">
    <property type="term" value="C:cytoplasm"/>
    <property type="evidence" value="ECO:0007669"/>
    <property type="project" value="UniProtKB-SubCell"/>
</dbReference>
<dbReference type="GO" id="GO:0006105">
    <property type="term" value="P:succinate metabolic process"/>
    <property type="evidence" value="ECO:0007669"/>
    <property type="project" value="TreeGrafter"/>
</dbReference>
<dbReference type="Gene3D" id="1.10.150.250">
    <property type="entry name" value="Flavinator of succinate dehydrogenase"/>
    <property type="match status" value="1"/>
</dbReference>
<dbReference type="InterPro" id="IPR005631">
    <property type="entry name" value="SDH"/>
</dbReference>
<dbReference type="InterPro" id="IPR036714">
    <property type="entry name" value="SDH_sf"/>
</dbReference>
<dbReference type="InterPro" id="IPR050531">
    <property type="entry name" value="SdhE_FAD_assembly_factor"/>
</dbReference>
<dbReference type="PANTHER" id="PTHR39585">
    <property type="entry name" value="FAD ASSEMBLY FACTOR SDHE"/>
    <property type="match status" value="1"/>
</dbReference>
<dbReference type="PANTHER" id="PTHR39585:SF1">
    <property type="entry name" value="FAD ASSEMBLY FACTOR SDHE"/>
    <property type="match status" value="1"/>
</dbReference>
<dbReference type="Pfam" id="PF03937">
    <property type="entry name" value="Sdh5"/>
    <property type="match status" value="1"/>
</dbReference>
<dbReference type="SUPFAM" id="SSF109910">
    <property type="entry name" value="YgfY-like"/>
    <property type="match status" value="1"/>
</dbReference>
<feature type="chain" id="PRO_0000214435" description="FAD assembly factor SdhE">
    <location>
        <begin position="1"/>
        <end position="97"/>
    </location>
</feature>
<keyword id="KW-0143">Chaperone</keyword>
<keyword id="KW-0963">Cytoplasm</keyword>
<organism>
    <name type="scientific">Xylella fastidiosa (strain 9a5c)</name>
    <dbReference type="NCBI Taxonomy" id="160492"/>
    <lineage>
        <taxon>Bacteria</taxon>
        <taxon>Pseudomonadati</taxon>
        <taxon>Pseudomonadota</taxon>
        <taxon>Gammaproteobacteria</taxon>
        <taxon>Lysobacterales</taxon>
        <taxon>Lysobacteraceae</taxon>
        <taxon>Xylella</taxon>
    </lineage>
</organism>
<comment type="function">
    <text evidence="1">An FAD assembly protein, which accelerates covalent attachment of the cofactor into other proteins. Plays an essential role in the assembly of succinate dehydrogenase (SDH, respiratory complex II), an enzyme complex that is a component of both the tricarboxylic acid cycle and the electron transport chain, and which couples the oxidation of succinate to fumarate with the reduction of ubiquinone (coenzyme Q) to ubiquinol. Required for flavinylation (covalent attachment of FAD) of the flavoprotein subunit SdhA of SDH and other flavinylated proteins as well.</text>
</comment>
<comment type="subcellular location">
    <subcellularLocation>
        <location evidence="1">Cytoplasm</location>
    </subcellularLocation>
</comment>
<comment type="similarity">
    <text evidence="2">Belongs to the SdhE FAD assembly factor family.</text>
</comment>
<name>SDHE_XYLFA</name>
<sequence>MCYCGCQRATAEEPTMDEPAELNKLRWRSRRGMRELDHLFDRYLSHRWAQASEAERGVFLRFLDCEDDKLWRWLMGYEVCQDASFAALIVTIRALPA</sequence>
<evidence type="ECO:0000250" key="1">
    <source>
        <dbReference type="UniProtKB" id="G4V4G2"/>
    </source>
</evidence>
<evidence type="ECO:0000305" key="2"/>
<gene>
    <name type="primary">sdhE</name>
    <name type="ordered locus">XF_1074</name>
</gene>
<proteinExistence type="inferred from homology"/>
<accession>Q9PEF4</accession>